<keyword id="KW-0238">DNA-binding</keyword>
<keyword id="KW-0658">Purine biosynthesis</keyword>
<keyword id="KW-0678">Repressor</keyword>
<keyword id="KW-0804">Transcription</keyword>
<keyword id="KW-0805">Transcription regulation</keyword>
<protein>
    <recommendedName>
        <fullName evidence="1">HTH-type transcriptional repressor PurR</fullName>
    </recommendedName>
    <alternativeName>
        <fullName evidence="1">Pur regulon repressor</fullName>
    </alternativeName>
    <alternativeName>
        <fullName evidence="1">Purine nucleotide synthesis repressor</fullName>
    </alternativeName>
</protein>
<reference key="1">
    <citation type="journal article" date="2011" name="J. Bacteriol.">
        <title>Comparative genomics of 28 Salmonella enterica isolates: evidence for CRISPR-mediated adaptive sublineage evolution.</title>
        <authorList>
            <person name="Fricke W.F."/>
            <person name="Mammel M.K."/>
            <person name="McDermott P.F."/>
            <person name="Tartera C."/>
            <person name="White D.G."/>
            <person name="Leclerc J.E."/>
            <person name="Ravel J."/>
            <person name="Cebula T.A."/>
        </authorList>
    </citation>
    <scope>NUCLEOTIDE SEQUENCE [LARGE SCALE GENOMIC DNA]</scope>
    <source>
        <strain>CVM19633</strain>
    </source>
</reference>
<gene>
    <name evidence="1" type="primary">purR</name>
    <name type="ordered locus">SeSA_A1526</name>
</gene>
<accession>B4TUY8</accession>
<organism>
    <name type="scientific">Salmonella schwarzengrund (strain CVM19633)</name>
    <dbReference type="NCBI Taxonomy" id="439843"/>
    <lineage>
        <taxon>Bacteria</taxon>
        <taxon>Pseudomonadati</taxon>
        <taxon>Pseudomonadota</taxon>
        <taxon>Gammaproteobacteria</taxon>
        <taxon>Enterobacterales</taxon>
        <taxon>Enterobacteriaceae</taxon>
        <taxon>Salmonella</taxon>
    </lineage>
</organism>
<comment type="function">
    <text evidence="1">Is the main repressor of the genes involved in the de novo synthesis of purine nucleotides, regulating purB, purC, purEK, purF, purHD, purL, purMN and guaBA expression. PurR is allosterically activated to bind its cognate DNA by binding the purine corepressors, hypoxanthine or guanine, thereby effecting transcription repression.</text>
</comment>
<comment type="pathway">
    <text>Purine metabolism; purine nucleotide biosynthesis [regulation].</text>
</comment>
<comment type="subunit">
    <text evidence="1">Homodimer.</text>
</comment>
<comment type="domain">
    <text evidence="1">Consists of two structural and functional domains: an N-terminal DNA-binding domain, approximately the first 60 residues, and a larger C-terminal domain, approximately 280 residues, which imparts the function of corepressor binding and oligomerization.</text>
</comment>
<evidence type="ECO:0000255" key="1">
    <source>
        <dbReference type="HAMAP-Rule" id="MF_01277"/>
    </source>
</evidence>
<proteinExistence type="inferred from homology"/>
<feature type="chain" id="PRO_1000140304" description="HTH-type transcriptional repressor PurR">
    <location>
        <begin position="1"/>
        <end position="341"/>
    </location>
</feature>
<feature type="domain" description="HTH lacI-type" evidence="1">
    <location>
        <begin position="2"/>
        <end position="56"/>
    </location>
</feature>
<feature type="DNA-binding region" description="H-T-H motif" evidence="1">
    <location>
        <begin position="4"/>
        <end position="23"/>
    </location>
</feature>
<feature type="DNA-binding region" evidence="1">
    <location>
        <begin position="48"/>
        <end position="56"/>
    </location>
</feature>
<feature type="binding site" evidence="1">
    <location>
        <position position="73"/>
    </location>
    <ligand>
        <name>hypoxanthine</name>
        <dbReference type="ChEBI" id="CHEBI:17368"/>
    </ligand>
</feature>
<feature type="binding site" evidence="1">
    <location>
        <position position="190"/>
    </location>
    <ligand>
        <name>hypoxanthine</name>
        <dbReference type="ChEBI" id="CHEBI:17368"/>
    </ligand>
</feature>
<feature type="binding site" evidence="1">
    <location>
        <position position="192"/>
    </location>
    <ligand>
        <name>hypoxanthine</name>
        <dbReference type="ChEBI" id="CHEBI:17368"/>
    </ligand>
</feature>
<feature type="binding site" evidence="1">
    <location>
        <position position="221"/>
    </location>
    <ligand>
        <name>hypoxanthine</name>
        <dbReference type="ChEBI" id="CHEBI:17368"/>
    </ligand>
</feature>
<feature type="binding site" evidence="1">
    <location>
        <position position="275"/>
    </location>
    <ligand>
        <name>hypoxanthine</name>
        <dbReference type="ChEBI" id="CHEBI:17368"/>
    </ligand>
</feature>
<sequence length="341" mass="38048">MATIKDVAKRANVSTTTVSHVINKTRFVAEETRNAVWAAIKELHYSPSAVARSLKVNHTKSIGLLATSSEAAYFAEIIEAVEKNCFQKGYTLILGNAWNNLEKQRAYLSMMAQKRVDGLLVMCSEYPEPLLSMLEEYRHIPMVVMDWGEAKADFTDTVIDNAFAGGYMAGRYLVERGHRDIGVIPGPLERNTGAGRLAGFMKAMEEALINVPDNWIVQGDFEPESGYHAMQQILSQSHRPTAVFCGGDIMAMGALCAADEMGLRVPQDVSVIGYDNVRNARYFTPALTTIHQPKDSLGETAFNMLLDRIVNKREESQSIEVHPRLVERRSVADGPFRDYRR</sequence>
<dbReference type="EMBL" id="CP001127">
    <property type="protein sequence ID" value="ACF89995.1"/>
    <property type="molecule type" value="Genomic_DNA"/>
</dbReference>
<dbReference type="RefSeq" id="WP_000190993.1">
    <property type="nucleotide sequence ID" value="NC_011094.1"/>
</dbReference>
<dbReference type="SMR" id="B4TUY8"/>
<dbReference type="KEGG" id="sew:SeSA_A1526"/>
<dbReference type="HOGENOM" id="CLU_037628_6_2_6"/>
<dbReference type="UniPathway" id="UPA00488"/>
<dbReference type="Proteomes" id="UP000001865">
    <property type="component" value="Chromosome"/>
</dbReference>
<dbReference type="GO" id="GO:0003700">
    <property type="term" value="F:DNA-binding transcription factor activity"/>
    <property type="evidence" value="ECO:0007669"/>
    <property type="project" value="TreeGrafter"/>
</dbReference>
<dbReference type="GO" id="GO:0000976">
    <property type="term" value="F:transcription cis-regulatory region binding"/>
    <property type="evidence" value="ECO:0007669"/>
    <property type="project" value="TreeGrafter"/>
</dbReference>
<dbReference type="GO" id="GO:0045892">
    <property type="term" value="P:negative regulation of DNA-templated transcription"/>
    <property type="evidence" value="ECO:0007669"/>
    <property type="project" value="UniProtKB-UniRule"/>
</dbReference>
<dbReference type="GO" id="GO:0006164">
    <property type="term" value="P:purine nucleotide biosynthetic process"/>
    <property type="evidence" value="ECO:0007669"/>
    <property type="project" value="UniProtKB-UniPathway"/>
</dbReference>
<dbReference type="CDD" id="cd01392">
    <property type="entry name" value="HTH_LacI"/>
    <property type="match status" value="1"/>
</dbReference>
<dbReference type="CDD" id="cd06275">
    <property type="entry name" value="PBP1_PurR"/>
    <property type="match status" value="1"/>
</dbReference>
<dbReference type="FunFam" id="1.10.260.40:FF:000002">
    <property type="entry name" value="HTH-type transcriptional repressor PurR"/>
    <property type="match status" value="1"/>
</dbReference>
<dbReference type="FunFam" id="3.40.50.2300:FF:000045">
    <property type="entry name" value="HTH-type transcriptional repressor PurR"/>
    <property type="match status" value="1"/>
</dbReference>
<dbReference type="Gene3D" id="3.40.50.2300">
    <property type="match status" value="2"/>
</dbReference>
<dbReference type="Gene3D" id="1.10.260.40">
    <property type="entry name" value="lambda repressor-like DNA-binding domains"/>
    <property type="match status" value="1"/>
</dbReference>
<dbReference type="HAMAP" id="MF_01277">
    <property type="entry name" value="HTH_type_PurR"/>
    <property type="match status" value="1"/>
</dbReference>
<dbReference type="InterPro" id="IPR000843">
    <property type="entry name" value="HTH_LacI"/>
</dbReference>
<dbReference type="InterPro" id="IPR046335">
    <property type="entry name" value="LacI/GalR-like_sensor"/>
</dbReference>
<dbReference type="InterPro" id="IPR010982">
    <property type="entry name" value="Lambda_DNA-bd_dom_sf"/>
</dbReference>
<dbReference type="InterPro" id="IPR028082">
    <property type="entry name" value="Peripla_BP_I"/>
</dbReference>
<dbReference type="InterPro" id="IPR023588">
    <property type="entry name" value="Tscrpt_reg_HTH_PurR"/>
</dbReference>
<dbReference type="NCBIfam" id="NF007979">
    <property type="entry name" value="PRK10703.1"/>
    <property type="match status" value="1"/>
</dbReference>
<dbReference type="PANTHER" id="PTHR30146:SF148">
    <property type="entry name" value="HTH-TYPE TRANSCRIPTIONAL REPRESSOR PURR-RELATED"/>
    <property type="match status" value="1"/>
</dbReference>
<dbReference type="PANTHER" id="PTHR30146">
    <property type="entry name" value="LACI-RELATED TRANSCRIPTIONAL REPRESSOR"/>
    <property type="match status" value="1"/>
</dbReference>
<dbReference type="Pfam" id="PF00356">
    <property type="entry name" value="LacI"/>
    <property type="match status" value="1"/>
</dbReference>
<dbReference type="Pfam" id="PF13377">
    <property type="entry name" value="Peripla_BP_3"/>
    <property type="match status" value="1"/>
</dbReference>
<dbReference type="PRINTS" id="PR00036">
    <property type="entry name" value="HTHLACI"/>
</dbReference>
<dbReference type="SMART" id="SM00354">
    <property type="entry name" value="HTH_LACI"/>
    <property type="match status" value="1"/>
</dbReference>
<dbReference type="SUPFAM" id="SSF47413">
    <property type="entry name" value="lambda repressor-like DNA-binding domains"/>
    <property type="match status" value="1"/>
</dbReference>
<dbReference type="SUPFAM" id="SSF53822">
    <property type="entry name" value="Periplasmic binding protein-like I"/>
    <property type="match status" value="1"/>
</dbReference>
<dbReference type="PROSITE" id="PS00356">
    <property type="entry name" value="HTH_LACI_1"/>
    <property type="match status" value="1"/>
</dbReference>
<dbReference type="PROSITE" id="PS50932">
    <property type="entry name" value="HTH_LACI_2"/>
    <property type="match status" value="1"/>
</dbReference>
<name>PURR_SALSV</name>